<proteinExistence type="predicted"/>
<feature type="chain" id="PRO_0000198714" description="Myosin light chain alkali">
    <location>
        <begin position="1" status="less than"/>
        <end position="82"/>
    </location>
</feature>
<feature type="domain" description="EF-hand" evidence="1">
    <location>
        <begin position="7"/>
        <end position="42"/>
    </location>
</feature>
<feature type="splice variant" id="VSP_003371" description="In isoform Indirect flight muscle." evidence="2">
    <original>QFVQRLMSDPVVFD</original>
    <variation>PFLARMCERPDQLK</variation>
    <location>
        <begin position="69"/>
        <end position="82"/>
    </location>
</feature>
<feature type="non-terminal residue">
    <location>
        <position position="1"/>
    </location>
</feature>
<name>MLC1_DROTE</name>
<sequence>KKEKEQGCYEDFIECLKLYDKEENGTMLLAELQHALLALGENLDDEQVETLFADCMDPEDDEGFIPYSQFVQRLMSDPVVFD</sequence>
<evidence type="ECO:0000255" key="1">
    <source>
        <dbReference type="PROSITE-ProRule" id="PRU00448"/>
    </source>
</evidence>
<evidence type="ECO:0000305" key="2"/>
<dbReference type="EMBL" id="L49008">
    <property type="protein sequence ID" value="AAC37272.1"/>
    <property type="molecule type" value="Genomic_DNA"/>
</dbReference>
<dbReference type="EMBL" id="L49008">
    <property type="protein sequence ID" value="AAC37273.1"/>
    <property type="molecule type" value="Genomic_DNA"/>
</dbReference>
<dbReference type="SMR" id="Q24695"/>
<dbReference type="EnsemblMetazoa" id="XM_043797203.1">
    <property type="protein sequence ID" value="XP_043653138.1"/>
    <property type="gene ID" value="LOC122619963"/>
</dbReference>
<dbReference type="GO" id="GO:0005859">
    <property type="term" value="C:muscle myosin complex"/>
    <property type="evidence" value="ECO:0000250"/>
    <property type="project" value="UniProtKB"/>
</dbReference>
<dbReference type="GO" id="GO:0005509">
    <property type="term" value="F:calcium ion binding"/>
    <property type="evidence" value="ECO:0007669"/>
    <property type="project" value="InterPro"/>
</dbReference>
<dbReference type="FunFam" id="1.10.238.10:FF:000267">
    <property type="entry name" value="Myosin light chain alkali"/>
    <property type="match status" value="1"/>
</dbReference>
<dbReference type="Gene3D" id="1.10.238.10">
    <property type="entry name" value="EF-hand"/>
    <property type="match status" value="1"/>
</dbReference>
<dbReference type="InterPro" id="IPR050230">
    <property type="entry name" value="CALM/Myosin/TropC-like"/>
</dbReference>
<dbReference type="InterPro" id="IPR011992">
    <property type="entry name" value="EF-hand-dom_pair"/>
</dbReference>
<dbReference type="InterPro" id="IPR002048">
    <property type="entry name" value="EF_hand_dom"/>
</dbReference>
<dbReference type="PANTHER" id="PTHR23048">
    <property type="entry name" value="MYOSIN LIGHT CHAIN 1, 3"/>
    <property type="match status" value="1"/>
</dbReference>
<dbReference type="PANTHER" id="PTHR23048:SF33">
    <property type="entry name" value="MYOSIN LIGHT CHAIN ALKALI"/>
    <property type="match status" value="1"/>
</dbReference>
<dbReference type="Pfam" id="PF13499">
    <property type="entry name" value="EF-hand_7"/>
    <property type="match status" value="1"/>
</dbReference>
<dbReference type="SUPFAM" id="SSF47473">
    <property type="entry name" value="EF-hand"/>
    <property type="match status" value="1"/>
</dbReference>
<dbReference type="PROSITE" id="PS50222">
    <property type="entry name" value="EF_HAND_2"/>
    <property type="match status" value="1"/>
</dbReference>
<protein>
    <recommendedName>
        <fullName>Myosin light chain alkali</fullName>
    </recommendedName>
</protein>
<reference key="1">
    <citation type="journal article" date="1996" name="Mol. Biol. Evol.">
        <title>Length variation and secondary structure of introns in the Mlc1 gene in six species of Drosophila.</title>
        <authorList>
            <person name="Clark A.G."/>
            <person name="Leicht B.G."/>
            <person name="Muse S.V."/>
        </authorList>
    </citation>
    <scope>NUCLEOTIDE SEQUENCE [GENOMIC DNA]</scope>
    <scope>ALTERNATIVE SPLICING</scope>
</reference>
<gene>
    <name type="primary">Mlc1</name>
</gene>
<comment type="subunit">
    <text>Myosin is a hexamer of 2 heavy chains and 4 light chains.</text>
</comment>
<comment type="alternative products">
    <event type="alternative splicing"/>
    <isoform>
        <id>Q24695-1</id>
        <name>Larval-adult</name>
        <name>Larval-non-IFM</name>
        <sequence type="displayed"/>
    </isoform>
    <isoform>
        <id>Q24695-2</id>
        <name>Indirect flight muscle</name>
        <name>Pupa</name>
        <name>Adult flight muscle</name>
        <sequence type="described" ref="VSP_003371"/>
    </isoform>
</comment>
<keyword id="KW-0025">Alternative splicing</keyword>
<keyword id="KW-0505">Motor protein</keyword>
<keyword id="KW-0514">Muscle protein</keyword>
<keyword id="KW-0518">Myosin</keyword>
<keyword id="KW-0677">Repeat</keyword>
<organism>
    <name type="scientific">Drosophila teissieri</name>
    <name type="common">Fruit fly</name>
    <dbReference type="NCBI Taxonomy" id="7243"/>
    <lineage>
        <taxon>Eukaryota</taxon>
        <taxon>Metazoa</taxon>
        <taxon>Ecdysozoa</taxon>
        <taxon>Arthropoda</taxon>
        <taxon>Hexapoda</taxon>
        <taxon>Insecta</taxon>
        <taxon>Pterygota</taxon>
        <taxon>Neoptera</taxon>
        <taxon>Endopterygota</taxon>
        <taxon>Diptera</taxon>
        <taxon>Brachycera</taxon>
        <taxon>Muscomorpha</taxon>
        <taxon>Ephydroidea</taxon>
        <taxon>Drosophilidae</taxon>
        <taxon>Drosophila</taxon>
        <taxon>Sophophora</taxon>
    </lineage>
</organism>
<accession>Q24695</accession>
<accession>Q24694</accession>